<reference key="1">
    <citation type="journal article" date="2009" name="Proc. Natl. Acad. Sci. U.S.A.">
        <title>Comparative genomics reveal the mechanism of the parallel evolution of O157 and non-O157 enterohemorrhagic Escherichia coli.</title>
        <authorList>
            <person name="Ogura Y."/>
            <person name="Ooka T."/>
            <person name="Iguchi A."/>
            <person name="Toh H."/>
            <person name="Asadulghani M."/>
            <person name="Oshima K."/>
            <person name="Kodama T."/>
            <person name="Abe H."/>
            <person name="Nakayama K."/>
            <person name="Kurokawa K."/>
            <person name="Tobe T."/>
            <person name="Hattori M."/>
            <person name="Hayashi T."/>
        </authorList>
    </citation>
    <scope>NUCLEOTIDE SEQUENCE [LARGE SCALE GENOMIC DNA]</scope>
    <source>
        <strain>11368 / EHEC</strain>
    </source>
</reference>
<accession>C8TNC0</accession>
<name>RUTC_ECO26</name>
<gene>
    <name evidence="1" type="primary">rutC</name>
    <name type="ordered locus">ECO26_1248</name>
</gene>
<organism>
    <name type="scientific">Escherichia coli O26:H11 (strain 11368 / EHEC)</name>
    <dbReference type="NCBI Taxonomy" id="573235"/>
    <lineage>
        <taxon>Bacteria</taxon>
        <taxon>Pseudomonadati</taxon>
        <taxon>Pseudomonadota</taxon>
        <taxon>Gammaproteobacteria</taxon>
        <taxon>Enterobacterales</taxon>
        <taxon>Enterobacteriaceae</taxon>
        <taxon>Escherichia</taxon>
    </lineage>
</organism>
<feature type="chain" id="PRO_0000402741" description="3-aminoacrylate deaminase RutC">
    <location>
        <begin position="1"/>
        <end position="128"/>
    </location>
</feature>
<dbReference type="EC" id="3.5.-.-" evidence="1"/>
<dbReference type="EMBL" id="AP010953">
    <property type="protein sequence ID" value="BAI24560.1"/>
    <property type="molecule type" value="Genomic_DNA"/>
</dbReference>
<dbReference type="RefSeq" id="WP_001126777.1">
    <property type="nucleotide sequence ID" value="NC_013361.1"/>
</dbReference>
<dbReference type="SMR" id="C8TNC0"/>
<dbReference type="KEGG" id="eoj:ECO26_1248"/>
<dbReference type="HOGENOM" id="CLU_100715_7_3_6"/>
<dbReference type="GO" id="GO:0005829">
    <property type="term" value="C:cytosol"/>
    <property type="evidence" value="ECO:0007669"/>
    <property type="project" value="TreeGrafter"/>
</dbReference>
<dbReference type="GO" id="GO:0019239">
    <property type="term" value="F:deaminase activity"/>
    <property type="evidence" value="ECO:0007669"/>
    <property type="project" value="TreeGrafter"/>
</dbReference>
<dbReference type="GO" id="GO:0019740">
    <property type="term" value="P:nitrogen utilization"/>
    <property type="evidence" value="ECO:0007669"/>
    <property type="project" value="UniProtKB-UniRule"/>
</dbReference>
<dbReference type="GO" id="GO:0006212">
    <property type="term" value="P:uracil catabolic process"/>
    <property type="evidence" value="ECO:0007669"/>
    <property type="project" value="UniProtKB-UniRule"/>
</dbReference>
<dbReference type="CDD" id="cd00448">
    <property type="entry name" value="YjgF_YER057c_UK114_family"/>
    <property type="match status" value="1"/>
</dbReference>
<dbReference type="FunFam" id="3.30.1330.40:FF:000003">
    <property type="entry name" value="Putative aminoacrylate peracid reductase RutC"/>
    <property type="match status" value="1"/>
</dbReference>
<dbReference type="Gene3D" id="3.30.1330.40">
    <property type="entry name" value="RutC-like"/>
    <property type="match status" value="1"/>
</dbReference>
<dbReference type="HAMAP" id="MF_00831">
    <property type="entry name" value="RutC"/>
    <property type="match status" value="1"/>
</dbReference>
<dbReference type="InterPro" id="IPR019897">
    <property type="entry name" value="RidA_CS"/>
</dbReference>
<dbReference type="InterPro" id="IPR019898">
    <property type="entry name" value="RutC"/>
</dbReference>
<dbReference type="InterPro" id="IPR035959">
    <property type="entry name" value="RutC-like_sf"/>
</dbReference>
<dbReference type="InterPro" id="IPR006175">
    <property type="entry name" value="YjgF/YER057c/UK114"/>
</dbReference>
<dbReference type="NCBIfam" id="TIGR03610">
    <property type="entry name" value="RutC"/>
    <property type="match status" value="1"/>
</dbReference>
<dbReference type="PANTHER" id="PTHR11803">
    <property type="entry name" value="2-IMINOBUTANOATE/2-IMINOPROPANOATE DEAMINASE RIDA"/>
    <property type="match status" value="1"/>
</dbReference>
<dbReference type="PANTHER" id="PTHR11803:SF58">
    <property type="entry name" value="PROTEIN HMF1-RELATED"/>
    <property type="match status" value="1"/>
</dbReference>
<dbReference type="Pfam" id="PF01042">
    <property type="entry name" value="Ribonuc_L-PSP"/>
    <property type="match status" value="1"/>
</dbReference>
<dbReference type="SUPFAM" id="SSF55298">
    <property type="entry name" value="YjgF-like"/>
    <property type="match status" value="1"/>
</dbReference>
<dbReference type="PROSITE" id="PS01094">
    <property type="entry name" value="UPF0076"/>
    <property type="match status" value="1"/>
</dbReference>
<keyword id="KW-0378">Hydrolase</keyword>
<evidence type="ECO:0000255" key="1">
    <source>
        <dbReference type="HAMAP-Rule" id="MF_00831"/>
    </source>
</evidence>
<protein>
    <recommendedName>
        <fullName evidence="1">3-aminoacrylate deaminase RutC</fullName>
        <shortName evidence="1">3-AA deaminase</shortName>
        <ecNumber evidence="1">3.5.-.-</ecNumber>
    </recommendedName>
</protein>
<proteinExistence type="inferred from homology"/>
<comment type="function">
    <text evidence="1">Involved in pyrimidine catabolism. Catalyzes the deamination of 3-aminoacrylate to malonic semialdehyde, a reaction that can also occur spontaneously. RutC may facilitate the reaction and modulate the metabolic fitness, rather than catalyzing essential functions.</text>
</comment>
<comment type="catalytic activity">
    <reaction evidence="1">
        <text>(Z)-3-aminoacrylate + H2O + H(+) = 3-oxopropanoate + NH4(+)</text>
        <dbReference type="Rhea" id="RHEA:34947"/>
        <dbReference type="ChEBI" id="CHEBI:15377"/>
        <dbReference type="ChEBI" id="CHEBI:15378"/>
        <dbReference type="ChEBI" id="CHEBI:28938"/>
        <dbReference type="ChEBI" id="CHEBI:33190"/>
        <dbReference type="ChEBI" id="CHEBI:59894"/>
    </reaction>
</comment>
<comment type="subunit">
    <text evidence="1">Homotrimer.</text>
</comment>
<comment type="similarity">
    <text evidence="1">Belongs to the RutC family.</text>
</comment>
<sequence>MPKSVIIPAGSSAPLAPFVPGTLADGVVYVSGTLAFDQHNNVLFADDPKAQTRHVLEIIRKVIETAGGTMADVTFNSIFITDWKNYAAINEIYAEFFPGDKPARFCIQCGLVKPDALVEIATIAHIAK</sequence>